<proteinExistence type="inferred from homology"/>
<reference key="1">
    <citation type="journal article" date="2006" name="Nat. Genet.">
        <title>The multidrug-resistant human pathogen Clostridium difficile has a highly mobile, mosaic genome.</title>
        <authorList>
            <person name="Sebaihia M."/>
            <person name="Wren B.W."/>
            <person name="Mullany P."/>
            <person name="Fairweather N.F."/>
            <person name="Minton N."/>
            <person name="Stabler R."/>
            <person name="Thomson N.R."/>
            <person name="Roberts A.P."/>
            <person name="Cerdeno-Tarraga A.M."/>
            <person name="Wang H."/>
            <person name="Holden M.T.G."/>
            <person name="Wright A."/>
            <person name="Churcher C."/>
            <person name="Quail M.A."/>
            <person name="Baker S."/>
            <person name="Bason N."/>
            <person name="Brooks K."/>
            <person name="Chillingworth T."/>
            <person name="Cronin A."/>
            <person name="Davis P."/>
            <person name="Dowd L."/>
            <person name="Fraser A."/>
            <person name="Feltwell T."/>
            <person name="Hance Z."/>
            <person name="Holroyd S."/>
            <person name="Jagels K."/>
            <person name="Moule S."/>
            <person name="Mungall K."/>
            <person name="Price C."/>
            <person name="Rabbinowitsch E."/>
            <person name="Sharp S."/>
            <person name="Simmonds M."/>
            <person name="Stevens K."/>
            <person name="Unwin L."/>
            <person name="Whithead S."/>
            <person name="Dupuy B."/>
            <person name="Dougan G."/>
            <person name="Barrell B."/>
            <person name="Parkhill J."/>
        </authorList>
    </citation>
    <scope>NUCLEOTIDE SEQUENCE [LARGE SCALE GENOMIC DNA]</scope>
    <source>
        <strain>630</strain>
    </source>
</reference>
<protein>
    <recommendedName>
        <fullName evidence="1">Endonuclease MutS2</fullName>
        <ecNumber evidence="1">3.1.-.-</ecNumber>
    </recommendedName>
    <alternativeName>
        <fullName evidence="1">Ribosome-associated protein quality control-upstream factor</fullName>
        <shortName evidence="1">RQC-upstream factor</shortName>
        <shortName evidence="1">RqcU</shortName>
        <ecNumber evidence="1">3.6.4.-</ecNumber>
    </alternativeName>
</protein>
<organism>
    <name type="scientific">Clostridioides difficile (strain 630)</name>
    <name type="common">Peptoclostridium difficile</name>
    <dbReference type="NCBI Taxonomy" id="272563"/>
    <lineage>
        <taxon>Bacteria</taxon>
        <taxon>Bacillati</taxon>
        <taxon>Bacillota</taxon>
        <taxon>Clostridia</taxon>
        <taxon>Peptostreptococcales</taxon>
        <taxon>Peptostreptococcaceae</taxon>
        <taxon>Clostridioides</taxon>
    </lineage>
</organism>
<comment type="function">
    <text evidence="1">Endonuclease that is involved in the suppression of homologous recombination and thus may have a key role in the control of bacterial genetic diversity.</text>
</comment>
<comment type="function">
    <text evidence="1">Acts as a ribosome collision sensor, splitting the ribosome into its 2 subunits. Detects stalled/collided 70S ribosomes which it binds and splits by an ATP-hydrolysis driven conformational change. Acts upstream of the ribosome quality control system (RQC), a ribosome-associated complex that mediates the extraction of incompletely synthesized nascent chains from stalled ribosomes and their subsequent degradation. Probably generates substrates for RQC.</text>
</comment>
<comment type="subunit">
    <text evidence="1">Homodimer. Binds to stalled ribosomes, contacting rRNA.</text>
</comment>
<comment type="similarity">
    <text evidence="1">Belongs to the DNA mismatch repair MutS family. MutS2 subfamily.</text>
</comment>
<gene>
    <name evidence="1" type="primary">mutS2</name>
    <name evidence="1" type="synonym">rqcU</name>
    <name type="ordered locus">CD630_07090</name>
</gene>
<evidence type="ECO:0000255" key="1">
    <source>
        <dbReference type="HAMAP-Rule" id="MF_00092"/>
    </source>
</evidence>
<sequence length="792" mass="88204">MNEKSLRVLEYNKIIDLLKKKASSSLGLKYIENLVPNTDFVEVKSMLEETSEAQSIIIKRGSVGLEGIHDIEDKVKRAYIGASLDPGSLIMIADTLRVARRLRNSLSSSDEEDFNYPIIQSLSNSLYVYKDIEDQIYNAIISEVEISDNASSILRDIRRRIAQKNQSIRSKLNSIISSTTYQKYLQDAIISLRGDRFVVPVKSEYRSQVAGIVHDQSSSGATLFIEPMTIVEMNNELRQLKLGEQEEIERILSELSAMVGEVSEDLISNQEILGRLDFAFSKGKLSIQMRGIEPTLNEDKYLNIKNGRHPLLDKKKVVANTIYLGRDFHTLVITGPNTGGKTVTIKTVGLFALMTQSGLHIPADYGSSMCVYDNVFADIGDEQSIEQSLSTFSSHMTNIVSILQNVTADSLVIFDELGAGTDPVEGAALAIAVLEDINSVGAKCIATTHYSELKNYALTKSGVENAAVEFDIETLSPTYKLLIGVPGKSNAFEISRKLGLSDYVISRAKEYINTENIALEDVLQNVEKNRIKAVEDREEAERLKEEIEKLKVEYDEKLEKLVSQRDKMIEKAKSEAFSIIRQAKEEVDIIIKELRSLEQERASKEKNRKIEELRKELTSSMGSLQPTVKSMIVPKVSNKEIKDLKPGEEVKVITLNQNGSVVSVDKKRKEAVVQIGIMKMTLPFKSLQKTRKDVSTNVTKSTRNIIRSKSGSVKNEVDLRGLNLEEAIMEVEKYLDDAYVAGLESVTVIHGIGTGVLKAGLQDILRRNRHVKSQRGGQYGEGGAGVTIVKLK</sequence>
<feature type="chain" id="PRO_1000093350" description="Endonuclease MutS2">
    <location>
        <begin position="1"/>
        <end position="792"/>
    </location>
</feature>
<feature type="domain" description="Smr" evidence="1">
    <location>
        <begin position="717"/>
        <end position="792"/>
    </location>
</feature>
<feature type="binding site" evidence="1">
    <location>
        <begin position="335"/>
        <end position="342"/>
    </location>
    <ligand>
        <name>ATP</name>
        <dbReference type="ChEBI" id="CHEBI:30616"/>
    </ligand>
</feature>
<dbReference type="EC" id="3.1.-.-" evidence="1"/>
<dbReference type="EC" id="3.6.4.-" evidence="1"/>
<dbReference type="EMBL" id="AM180355">
    <property type="protein sequence ID" value="CAJ67542.1"/>
    <property type="molecule type" value="Genomic_DNA"/>
</dbReference>
<dbReference type="RefSeq" id="WP_011860930.1">
    <property type="nucleotide sequence ID" value="NZ_JAUPES010000005.1"/>
</dbReference>
<dbReference type="RefSeq" id="YP_001087185.1">
    <property type="nucleotide sequence ID" value="NC_009089.1"/>
</dbReference>
<dbReference type="SMR" id="Q189Q3"/>
<dbReference type="STRING" id="272563.CD630_07090"/>
<dbReference type="EnsemblBacteria" id="CAJ67542">
    <property type="protein sequence ID" value="CAJ67542"/>
    <property type="gene ID" value="CD630_07090"/>
</dbReference>
<dbReference type="KEGG" id="cdf:CD630_07090"/>
<dbReference type="KEGG" id="pdc:CDIF630_00824"/>
<dbReference type="PATRIC" id="fig|272563.120.peg.729"/>
<dbReference type="eggNOG" id="COG1193">
    <property type="taxonomic scope" value="Bacteria"/>
</dbReference>
<dbReference type="OrthoDB" id="9808166at2"/>
<dbReference type="PhylomeDB" id="Q189Q3"/>
<dbReference type="BioCyc" id="PDIF272563:G12WB-819-MONOMER"/>
<dbReference type="Proteomes" id="UP000001978">
    <property type="component" value="Chromosome"/>
</dbReference>
<dbReference type="GO" id="GO:0005524">
    <property type="term" value="F:ATP binding"/>
    <property type="evidence" value="ECO:0007669"/>
    <property type="project" value="UniProtKB-UniRule"/>
</dbReference>
<dbReference type="GO" id="GO:0016887">
    <property type="term" value="F:ATP hydrolysis activity"/>
    <property type="evidence" value="ECO:0007669"/>
    <property type="project" value="InterPro"/>
</dbReference>
<dbReference type="GO" id="GO:0140664">
    <property type="term" value="F:ATP-dependent DNA damage sensor activity"/>
    <property type="evidence" value="ECO:0007669"/>
    <property type="project" value="InterPro"/>
</dbReference>
<dbReference type="GO" id="GO:0004519">
    <property type="term" value="F:endonuclease activity"/>
    <property type="evidence" value="ECO:0007669"/>
    <property type="project" value="UniProtKB-UniRule"/>
</dbReference>
<dbReference type="GO" id="GO:0030983">
    <property type="term" value="F:mismatched DNA binding"/>
    <property type="evidence" value="ECO:0007669"/>
    <property type="project" value="InterPro"/>
</dbReference>
<dbReference type="GO" id="GO:0043023">
    <property type="term" value="F:ribosomal large subunit binding"/>
    <property type="evidence" value="ECO:0007669"/>
    <property type="project" value="UniProtKB-UniRule"/>
</dbReference>
<dbReference type="GO" id="GO:0019843">
    <property type="term" value="F:rRNA binding"/>
    <property type="evidence" value="ECO:0007669"/>
    <property type="project" value="UniProtKB-UniRule"/>
</dbReference>
<dbReference type="GO" id="GO:0006298">
    <property type="term" value="P:mismatch repair"/>
    <property type="evidence" value="ECO:0007669"/>
    <property type="project" value="InterPro"/>
</dbReference>
<dbReference type="GO" id="GO:0045910">
    <property type="term" value="P:negative regulation of DNA recombination"/>
    <property type="evidence" value="ECO:0007669"/>
    <property type="project" value="InterPro"/>
</dbReference>
<dbReference type="GO" id="GO:0072344">
    <property type="term" value="P:rescue of stalled ribosome"/>
    <property type="evidence" value="ECO:0007669"/>
    <property type="project" value="UniProtKB-UniRule"/>
</dbReference>
<dbReference type="CDD" id="cd03280">
    <property type="entry name" value="ABC_MutS2"/>
    <property type="match status" value="1"/>
</dbReference>
<dbReference type="CDD" id="cd06503">
    <property type="entry name" value="ATP-synt_Fo_b"/>
    <property type="match status" value="1"/>
</dbReference>
<dbReference type="FunFam" id="3.40.50.300:FF:000830">
    <property type="entry name" value="Endonuclease MutS2"/>
    <property type="match status" value="1"/>
</dbReference>
<dbReference type="Gene3D" id="3.30.1370.110">
    <property type="match status" value="1"/>
</dbReference>
<dbReference type="Gene3D" id="3.40.50.300">
    <property type="entry name" value="P-loop containing nucleotide triphosphate hydrolases"/>
    <property type="match status" value="1"/>
</dbReference>
<dbReference type="HAMAP" id="MF_00092">
    <property type="entry name" value="MutS2"/>
    <property type="match status" value="1"/>
</dbReference>
<dbReference type="InterPro" id="IPR000432">
    <property type="entry name" value="DNA_mismatch_repair_MutS_C"/>
</dbReference>
<dbReference type="InterPro" id="IPR007696">
    <property type="entry name" value="DNA_mismatch_repair_MutS_core"/>
</dbReference>
<dbReference type="InterPro" id="IPR036187">
    <property type="entry name" value="DNA_mismatch_repair_MutS_sf"/>
</dbReference>
<dbReference type="InterPro" id="IPR046893">
    <property type="entry name" value="MSSS"/>
</dbReference>
<dbReference type="InterPro" id="IPR045076">
    <property type="entry name" value="MutS"/>
</dbReference>
<dbReference type="InterPro" id="IPR005747">
    <property type="entry name" value="MutS2"/>
</dbReference>
<dbReference type="InterPro" id="IPR027417">
    <property type="entry name" value="P-loop_NTPase"/>
</dbReference>
<dbReference type="InterPro" id="IPR002625">
    <property type="entry name" value="Smr_dom"/>
</dbReference>
<dbReference type="InterPro" id="IPR036063">
    <property type="entry name" value="Smr_dom_sf"/>
</dbReference>
<dbReference type="NCBIfam" id="TIGR01069">
    <property type="entry name" value="mutS2"/>
    <property type="match status" value="1"/>
</dbReference>
<dbReference type="PANTHER" id="PTHR48466:SF2">
    <property type="entry name" value="OS10G0509000 PROTEIN"/>
    <property type="match status" value="1"/>
</dbReference>
<dbReference type="PANTHER" id="PTHR48466">
    <property type="entry name" value="OS10G0509000 PROTEIN-RELATED"/>
    <property type="match status" value="1"/>
</dbReference>
<dbReference type="Pfam" id="PF20297">
    <property type="entry name" value="MSSS"/>
    <property type="match status" value="1"/>
</dbReference>
<dbReference type="Pfam" id="PF00488">
    <property type="entry name" value="MutS_V"/>
    <property type="match status" value="1"/>
</dbReference>
<dbReference type="Pfam" id="PF01713">
    <property type="entry name" value="Smr"/>
    <property type="match status" value="1"/>
</dbReference>
<dbReference type="PIRSF" id="PIRSF005814">
    <property type="entry name" value="MutS_YshD"/>
    <property type="match status" value="1"/>
</dbReference>
<dbReference type="SMART" id="SM00534">
    <property type="entry name" value="MUTSac"/>
    <property type="match status" value="1"/>
</dbReference>
<dbReference type="SMART" id="SM00533">
    <property type="entry name" value="MUTSd"/>
    <property type="match status" value="1"/>
</dbReference>
<dbReference type="SMART" id="SM00463">
    <property type="entry name" value="SMR"/>
    <property type="match status" value="1"/>
</dbReference>
<dbReference type="SUPFAM" id="SSF48334">
    <property type="entry name" value="DNA repair protein MutS, domain III"/>
    <property type="match status" value="1"/>
</dbReference>
<dbReference type="SUPFAM" id="SSF52540">
    <property type="entry name" value="P-loop containing nucleoside triphosphate hydrolases"/>
    <property type="match status" value="1"/>
</dbReference>
<dbReference type="SUPFAM" id="SSF160443">
    <property type="entry name" value="SMR domain-like"/>
    <property type="match status" value="1"/>
</dbReference>
<dbReference type="PROSITE" id="PS00486">
    <property type="entry name" value="DNA_MISMATCH_REPAIR_2"/>
    <property type="match status" value="1"/>
</dbReference>
<dbReference type="PROSITE" id="PS50828">
    <property type="entry name" value="SMR"/>
    <property type="match status" value="1"/>
</dbReference>
<accession>Q189Q3</accession>
<keyword id="KW-0067">ATP-binding</keyword>
<keyword id="KW-0238">DNA-binding</keyword>
<keyword id="KW-0255">Endonuclease</keyword>
<keyword id="KW-0378">Hydrolase</keyword>
<keyword id="KW-0540">Nuclease</keyword>
<keyword id="KW-0547">Nucleotide-binding</keyword>
<keyword id="KW-1185">Reference proteome</keyword>
<keyword id="KW-0694">RNA-binding</keyword>
<keyword id="KW-0699">rRNA-binding</keyword>
<name>MUTS2_CLOD6</name>